<gene>
    <name evidence="1" type="primary">guaA</name>
    <name type="ordered locus">plu2712</name>
</gene>
<dbReference type="EC" id="6.3.5.2" evidence="1"/>
<dbReference type="EMBL" id="BX571868">
    <property type="protein sequence ID" value="CAE15086.1"/>
    <property type="molecule type" value="Genomic_DNA"/>
</dbReference>
<dbReference type="RefSeq" id="WP_011146933.1">
    <property type="nucleotide sequence ID" value="NC_005126.1"/>
</dbReference>
<dbReference type="SMR" id="Q7N3K4"/>
<dbReference type="STRING" id="243265.plu2712"/>
<dbReference type="GeneID" id="48848973"/>
<dbReference type="KEGG" id="plu:plu2712"/>
<dbReference type="eggNOG" id="COG0518">
    <property type="taxonomic scope" value="Bacteria"/>
</dbReference>
<dbReference type="eggNOG" id="COG0519">
    <property type="taxonomic scope" value="Bacteria"/>
</dbReference>
<dbReference type="HOGENOM" id="CLU_014340_0_5_6"/>
<dbReference type="OrthoDB" id="9802219at2"/>
<dbReference type="UniPathway" id="UPA00189">
    <property type="reaction ID" value="UER00296"/>
</dbReference>
<dbReference type="Proteomes" id="UP000002514">
    <property type="component" value="Chromosome"/>
</dbReference>
<dbReference type="GO" id="GO:0005829">
    <property type="term" value="C:cytosol"/>
    <property type="evidence" value="ECO:0007669"/>
    <property type="project" value="TreeGrafter"/>
</dbReference>
<dbReference type="GO" id="GO:0005524">
    <property type="term" value="F:ATP binding"/>
    <property type="evidence" value="ECO:0007669"/>
    <property type="project" value="UniProtKB-UniRule"/>
</dbReference>
<dbReference type="GO" id="GO:0003921">
    <property type="term" value="F:GMP synthase activity"/>
    <property type="evidence" value="ECO:0007669"/>
    <property type="project" value="InterPro"/>
</dbReference>
<dbReference type="CDD" id="cd01742">
    <property type="entry name" value="GATase1_GMP_Synthase"/>
    <property type="match status" value="1"/>
</dbReference>
<dbReference type="CDD" id="cd01997">
    <property type="entry name" value="GMP_synthase_C"/>
    <property type="match status" value="1"/>
</dbReference>
<dbReference type="FunFam" id="3.30.300.10:FF:000002">
    <property type="entry name" value="GMP synthase [glutamine-hydrolyzing]"/>
    <property type="match status" value="1"/>
</dbReference>
<dbReference type="FunFam" id="3.40.50.620:FF:000001">
    <property type="entry name" value="GMP synthase [glutamine-hydrolyzing]"/>
    <property type="match status" value="1"/>
</dbReference>
<dbReference type="FunFam" id="3.40.50.880:FF:000001">
    <property type="entry name" value="GMP synthase [glutamine-hydrolyzing]"/>
    <property type="match status" value="1"/>
</dbReference>
<dbReference type="Gene3D" id="3.30.300.10">
    <property type="match status" value="1"/>
</dbReference>
<dbReference type="Gene3D" id="3.40.50.880">
    <property type="match status" value="1"/>
</dbReference>
<dbReference type="Gene3D" id="3.40.50.620">
    <property type="entry name" value="HUPs"/>
    <property type="match status" value="1"/>
</dbReference>
<dbReference type="HAMAP" id="MF_00344">
    <property type="entry name" value="GMP_synthase"/>
    <property type="match status" value="1"/>
</dbReference>
<dbReference type="InterPro" id="IPR029062">
    <property type="entry name" value="Class_I_gatase-like"/>
</dbReference>
<dbReference type="InterPro" id="IPR017926">
    <property type="entry name" value="GATASE"/>
</dbReference>
<dbReference type="InterPro" id="IPR001674">
    <property type="entry name" value="GMP_synth_C"/>
</dbReference>
<dbReference type="InterPro" id="IPR004739">
    <property type="entry name" value="GMP_synth_GATase"/>
</dbReference>
<dbReference type="InterPro" id="IPR022955">
    <property type="entry name" value="GMP_synthase"/>
</dbReference>
<dbReference type="InterPro" id="IPR025777">
    <property type="entry name" value="GMPS_ATP_PPase_dom"/>
</dbReference>
<dbReference type="InterPro" id="IPR022310">
    <property type="entry name" value="NAD/GMP_synthase"/>
</dbReference>
<dbReference type="InterPro" id="IPR014729">
    <property type="entry name" value="Rossmann-like_a/b/a_fold"/>
</dbReference>
<dbReference type="NCBIfam" id="TIGR00884">
    <property type="entry name" value="guaA_Cterm"/>
    <property type="match status" value="1"/>
</dbReference>
<dbReference type="NCBIfam" id="TIGR00888">
    <property type="entry name" value="guaA_Nterm"/>
    <property type="match status" value="1"/>
</dbReference>
<dbReference type="NCBIfam" id="NF000848">
    <property type="entry name" value="PRK00074.1"/>
    <property type="match status" value="1"/>
</dbReference>
<dbReference type="PANTHER" id="PTHR11922:SF2">
    <property type="entry name" value="GMP SYNTHASE [GLUTAMINE-HYDROLYZING]"/>
    <property type="match status" value="1"/>
</dbReference>
<dbReference type="PANTHER" id="PTHR11922">
    <property type="entry name" value="GMP SYNTHASE-RELATED"/>
    <property type="match status" value="1"/>
</dbReference>
<dbReference type="Pfam" id="PF00117">
    <property type="entry name" value="GATase"/>
    <property type="match status" value="1"/>
</dbReference>
<dbReference type="Pfam" id="PF00958">
    <property type="entry name" value="GMP_synt_C"/>
    <property type="match status" value="1"/>
</dbReference>
<dbReference type="Pfam" id="PF02540">
    <property type="entry name" value="NAD_synthase"/>
    <property type="match status" value="1"/>
</dbReference>
<dbReference type="PRINTS" id="PR00097">
    <property type="entry name" value="ANTSNTHASEII"/>
</dbReference>
<dbReference type="PRINTS" id="PR00099">
    <property type="entry name" value="CPSGATASE"/>
</dbReference>
<dbReference type="PRINTS" id="PR00096">
    <property type="entry name" value="GATASE"/>
</dbReference>
<dbReference type="SUPFAM" id="SSF52402">
    <property type="entry name" value="Adenine nucleotide alpha hydrolases-like"/>
    <property type="match status" value="1"/>
</dbReference>
<dbReference type="SUPFAM" id="SSF52317">
    <property type="entry name" value="Class I glutamine amidotransferase-like"/>
    <property type="match status" value="1"/>
</dbReference>
<dbReference type="SUPFAM" id="SSF54810">
    <property type="entry name" value="GMP synthetase C-terminal dimerisation domain"/>
    <property type="match status" value="1"/>
</dbReference>
<dbReference type="PROSITE" id="PS51273">
    <property type="entry name" value="GATASE_TYPE_1"/>
    <property type="match status" value="1"/>
</dbReference>
<dbReference type="PROSITE" id="PS51553">
    <property type="entry name" value="GMPS_ATP_PPASE"/>
    <property type="match status" value="1"/>
</dbReference>
<accession>Q7N3K4</accession>
<feature type="chain" id="PRO_0000140156" description="GMP synthase [glutamine-hydrolyzing]">
    <location>
        <begin position="1"/>
        <end position="525"/>
    </location>
</feature>
<feature type="domain" description="Glutamine amidotransferase type-1" evidence="1">
    <location>
        <begin position="9"/>
        <end position="207"/>
    </location>
</feature>
<feature type="domain" description="GMPS ATP-PPase" evidence="1">
    <location>
        <begin position="208"/>
        <end position="400"/>
    </location>
</feature>
<feature type="active site" description="Nucleophile" evidence="1">
    <location>
        <position position="86"/>
    </location>
</feature>
<feature type="active site" evidence="1">
    <location>
        <position position="181"/>
    </location>
</feature>
<feature type="active site" evidence="1">
    <location>
        <position position="183"/>
    </location>
</feature>
<feature type="binding site" evidence="1">
    <location>
        <begin position="235"/>
        <end position="241"/>
    </location>
    <ligand>
        <name>ATP</name>
        <dbReference type="ChEBI" id="CHEBI:30616"/>
    </ligand>
</feature>
<proteinExistence type="inferred from homology"/>
<keyword id="KW-0067">ATP-binding</keyword>
<keyword id="KW-0315">Glutamine amidotransferase</keyword>
<keyword id="KW-0332">GMP biosynthesis</keyword>
<keyword id="KW-0436">Ligase</keyword>
<keyword id="KW-0547">Nucleotide-binding</keyword>
<keyword id="KW-0658">Purine biosynthesis</keyword>
<keyword id="KW-1185">Reference proteome</keyword>
<sequence length="525" mass="58578">MTTNIHQHRILILDFGSQYTQLIARRIREIGVYCELWAWDVTEEQIREFNPSGIILSGGPESTTAQGSPRAPEYVFNAGVPVLGVCYGMQTMSVQFGGKVEDSTEREFGYAQVEIKAESALFRGIQDSLNEQGKPSLDVWMSHGDKVTAIPEDFITIASTDTCPFAIIANEEKRFYGVQFHPEVTHTHQGQRILERFVLDVCQCEALWTPASIIEDTVVRLREQVGEDHVILGLSGGVDSSVTALLLHRAIGNRLTCVFVDNGLLRLNEATQVMEMFAGKFGLNIVHVPAEDRFLTALAGINDPEEKRKTIGRVFVEVFDEEASKQAQVKWLAQGTIYPDVIESAASATGKAHVIKSHHNVGGLPEEMKLGLVEPLKELFKDEVRKIGLELGLPYDMLNRHPFPGPGLGVRVLGEVKKEYCDLLRQADAIFIEELHKADLYNKVSQAFTVFLPVRSVGVMGDGRKYDWVVSLRAVETIDFMTAHWAHLPYDFLGRVSNRIINEVNGISRVVYDVSGKPPATIEWE</sequence>
<reference key="1">
    <citation type="journal article" date="2003" name="Nat. Biotechnol.">
        <title>The genome sequence of the entomopathogenic bacterium Photorhabdus luminescens.</title>
        <authorList>
            <person name="Duchaud E."/>
            <person name="Rusniok C."/>
            <person name="Frangeul L."/>
            <person name="Buchrieser C."/>
            <person name="Givaudan A."/>
            <person name="Taourit S."/>
            <person name="Bocs S."/>
            <person name="Boursaux-Eude C."/>
            <person name="Chandler M."/>
            <person name="Charles J.-F."/>
            <person name="Dassa E."/>
            <person name="Derose R."/>
            <person name="Derzelle S."/>
            <person name="Freyssinet G."/>
            <person name="Gaudriault S."/>
            <person name="Medigue C."/>
            <person name="Lanois A."/>
            <person name="Powell K."/>
            <person name="Siguier P."/>
            <person name="Vincent R."/>
            <person name="Wingate V."/>
            <person name="Zouine M."/>
            <person name="Glaser P."/>
            <person name="Boemare N."/>
            <person name="Danchin A."/>
            <person name="Kunst F."/>
        </authorList>
    </citation>
    <scope>NUCLEOTIDE SEQUENCE [LARGE SCALE GENOMIC DNA]</scope>
    <source>
        <strain>DSM 15139 / CIP 105565 / TT01</strain>
    </source>
</reference>
<protein>
    <recommendedName>
        <fullName evidence="1">GMP synthase [glutamine-hydrolyzing]</fullName>
        <ecNumber evidence="1">6.3.5.2</ecNumber>
    </recommendedName>
    <alternativeName>
        <fullName evidence="1">GMP synthetase</fullName>
    </alternativeName>
    <alternativeName>
        <fullName evidence="1">Glutamine amidotransferase</fullName>
    </alternativeName>
</protein>
<organism>
    <name type="scientific">Photorhabdus laumondii subsp. laumondii (strain DSM 15139 / CIP 105565 / TT01)</name>
    <name type="common">Photorhabdus luminescens subsp. laumondii</name>
    <dbReference type="NCBI Taxonomy" id="243265"/>
    <lineage>
        <taxon>Bacteria</taxon>
        <taxon>Pseudomonadati</taxon>
        <taxon>Pseudomonadota</taxon>
        <taxon>Gammaproteobacteria</taxon>
        <taxon>Enterobacterales</taxon>
        <taxon>Morganellaceae</taxon>
        <taxon>Photorhabdus</taxon>
    </lineage>
</organism>
<name>GUAA_PHOLL</name>
<evidence type="ECO:0000255" key="1">
    <source>
        <dbReference type="HAMAP-Rule" id="MF_00344"/>
    </source>
</evidence>
<comment type="function">
    <text evidence="1">Catalyzes the synthesis of GMP from XMP.</text>
</comment>
<comment type="catalytic activity">
    <reaction evidence="1">
        <text>XMP + L-glutamine + ATP + H2O = GMP + L-glutamate + AMP + diphosphate + 2 H(+)</text>
        <dbReference type="Rhea" id="RHEA:11680"/>
        <dbReference type="ChEBI" id="CHEBI:15377"/>
        <dbReference type="ChEBI" id="CHEBI:15378"/>
        <dbReference type="ChEBI" id="CHEBI:29985"/>
        <dbReference type="ChEBI" id="CHEBI:30616"/>
        <dbReference type="ChEBI" id="CHEBI:33019"/>
        <dbReference type="ChEBI" id="CHEBI:57464"/>
        <dbReference type="ChEBI" id="CHEBI:58115"/>
        <dbReference type="ChEBI" id="CHEBI:58359"/>
        <dbReference type="ChEBI" id="CHEBI:456215"/>
        <dbReference type="EC" id="6.3.5.2"/>
    </reaction>
</comment>
<comment type="pathway">
    <text evidence="1">Purine metabolism; GMP biosynthesis; GMP from XMP (L-Gln route): step 1/1.</text>
</comment>
<comment type="subunit">
    <text evidence="1">Homodimer.</text>
</comment>